<name>RO52_BOVIN</name>
<dbReference type="EC" id="2.3.2.27"/>
<dbReference type="EMBL" id="AY312278">
    <property type="protein sequence ID" value="AAP79314.1"/>
    <property type="molecule type" value="mRNA"/>
</dbReference>
<dbReference type="EMBL" id="BT021885">
    <property type="protein sequence ID" value="AAX46732.1"/>
    <property type="molecule type" value="mRNA"/>
</dbReference>
<dbReference type="EMBL" id="BC123700">
    <property type="protein sequence ID" value="AAI23701.1"/>
    <property type="molecule type" value="mRNA"/>
</dbReference>
<dbReference type="RefSeq" id="NP_872596.1">
    <property type="nucleotide sequence ID" value="NM_182655.2"/>
</dbReference>
<dbReference type="RefSeq" id="XP_005216209.1">
    <property type="nucleotide sequence ID" value="XM_005216152.5"/>
</dbReference>
<dbReference type="SMR" id="Q7YRV4"/>
<dbReference type="FunCoup" id="Q7YRV4">
    <property type="interactions" value="341"/>
</dbReference>
<dbReference type="STRING" id="9913.ENSBTAP00000018459"/>
<dbReference type="PaxDb" id="9913-ENSBTAP00000054004"/>
<dbReference type="Ensembl" id="ENSBTAT00000018459.6">
    <property type="protein sequence ID" value="ENSBTAP00000018459.4"/>
    <property type="gene ID" value="ENSBTAG00000013900.7"/>
</dbReference>
<dbReference type="GeneID" id="359715"/>
<dbReference type="KEGG" id="bta:359715"/>
<dbReference type="CTD" id="6737"/>
<dbReference type="VEuPathDB" id="HostDB:ENSBTAG00000013900"/>
<dbReference type="VGNC" id="VGNC:36319">
    <property type="gene designation" value="TRIM21"/>
</dbReference>
<dbReference type="eggNOG" id="KOG2177">
    <property type="taxonomic scope" value="Eukaryota"/>
</dbReference>
<dbReference type="GeneTree" id="ENSGT00940000161515"/>
<dbReference type="HOGENOM" id="CLU_013137_0_3_1"/>
<dbReference type="InParanoid" id="Q7YRV4"/>
<dbReference type="OMA" id="CRNSVQR"/>
<dbReference type="OrthoDB" id="128536at2759"/>
<dbReference type="Reactome" id="R-BTA-3134975">
    <property type="pathway name" value="Regulation of innate immune responses to cytosolic DNA"/>
</dbReference>
<dbReference type="Reactome" id="R-BTA-9755511">
    <property type="pathway name" value="KEAP1-NFE2L2 pathway"/>
</dbReference>
<dbReference type="Reactome" id="R-BTA-983168">
    <property type="pathway name" value="Antigen processing: Ubiquitination &amp; Proteasome degradation"/>
</dbReference>
<dbReference type="UniPathway" id="UPA00143"/>
<dbReference type="Proteomes" id="UP000009136">
    <property type="component" value="Chromosome 15"/>
</dbReference>
<dbReference type="Bgee" id="ENSBTAG00000013900">
    <property type="expression patterns" value="Expressed in leukocyte and 107 other cell types or tissues"/>
</dbReference>
<dbReference type="GO" id="GO:0005776">
    <property type="term" value="C:autophagosome"/>
    <property type="evidence" value="ECO:0007669"/>
    <property type="project" value="UniProtKB-SubCell"/>
</dbReference>
<dbReference type="GO" id="GO:0005737">
    <property type="term" value="C:cytoplasm"/>
    <property type="evidence" value="ECO:0000250"/>
    <property type="project" value="UniProtKB"/>
</dbReference>
<dbReference type="GO" id="GO:0010494">
    <property type="term" value="C:cytoplasmic stress granule"/>
    <property type="evidence" value="ECO:0000250"/>
    <property type="project" value="UniProtKB"/>
</dbReference>
<dbReference type="GO" id="GO:0031410">
    <property type="term" value="C:cytoplasmic vesicle"/>
    <property type="evidence" value="ECO:0007669"/>
    <property type="project" value="UniProtKB-KW"/>
</dbReference>
<dbReference type="GO" id="GO:0005654">
    <property type="term" value="C:nucleoplasm"/>
    <property type="evidence" value="ECO:0000318"/>
    <property type="project" value="GO_Central"/>
</dbReference>
<dbReference type="GO" id="GO:0005634">
    <property type="term" value="C:nucleus"/>
    <property type="evidence" value="ECO:0000250"/>
    <property type="project" value="UniProtKB"/>
</dbReference>
<dbReference type="GO" id="GO:0000932">
    <property type="term" value="C:P-body"/>
    <property type="evidence" value="ECO:0007669"/>
    <property type="project" value="UniProtKB-SubCell"/>
</dbReference>
<dbReference type="GO" id="GO:1990904">
    <property type="term" value="C:ribonucleoprotein complex"/>
    <property type="evidence" value="ECO:0007669"/>
    <property type="project" value="UniProtKB-KW"/>
</dbReference>
<dbReference type="GO" id="GO:0003677">
    <property type="term" value="F:DNA binding"/>
    <property type="evidence" value="ECO:0007669"/>
    <property type="project" value="UniProtKB-KW"/>
</dbReference>
<dbReference type="GO" id="GO:0003723">
    <property type="term" value="F:RNA binding"/>
    <property type="evidence" value="ECO:0007669"/>
    <property type="project" value="UniProtKB-KW"/>
</dbReference>
<dbReference type="GO" id="GO:0061630">
    <property type="term" value="F:ubiquitin protein ligase activity"/>
    <property type="evidence" value="ECO:0000250"/>
    <property type="project" value="UniProtKB"/>
</dbReference>
<dbReference type="GO" id="GO:0004842">
    <property type="term" value="F:ubiquitin-protein transferase activity"/>
    <property type="evidence" value="ECO:0000250"/>
    <property type="project" value="UniProtKB"/>
</dbReference>
<dbReference type="GO" id="GO:0008270">
    <property type="term" value="F:zinc ion binding"/>
    <property type="evidence" value="ECO:0007669"/>
    <property type="project" value="UniProtKB-KW"/>
</dbReference>
<dbReference type="GO" id="GO:0045087">
    <property type="term" value="P:innate immune response"/>
    <property type="evidence" value="ECO:0000318"/>
    <property type="project" value="GO_Central"/>
</dbReference>
<dbReference type="GO" id="GO:0045824">
    <property type="term" value="P:negative regulation of innate immune response"/>
    <property type="evidence" value="ECO:0000250"/>
    <property type="project" value="UniProtKB"/>
</dbReference>
<dbReference type="GO" id="GO:0032088">
    <property type="term" value="P:negative regulation of NF-kappaB transcription factor activity"/>
    <property type="evidence" value="ECO:0000250"/>
    <property type="project" value="UniProtKB"/>
</dbReference>
<dbReference type="GO" id="GO:0090086">
    <property type="term" value="P:negative regulation of protein deubiquitination"/>
    <property type="evidence" value="ECO:0000250"/>
    <property type="project" value="UniProtKB"/>
</dbReference>
<dbReference type="GO" id="GO:0010508">
    <property type="term" value="P:positive regulation of autophagy"/>
    <property type="evidence" value="ECO:0000250"/>
    <property type="project" value="UniProtKB"/>
</dbReference>
<dbReference type="GO" id="GO:0045787">
    <property type="term" value="P:positive regulation of cell cycle"/>
    <property type="evidence" value="ECO:0000250"/>
    <property type="project" value="UniProtKB"/>
</dbReference>
<dbReference type="GO" id="GO:0032092">
    <property type="term" value="P:positive regulation of protein binding"/>
    <property type="evidence" value="ECO:0000250"/>
    <property type="project" value="UniProtKB"/>
</dbReference>
<dbReference type="GO" id="GO:0051865">
    <property type="term" value="P:protein autoubiquitination"/>
    <property type="evidence" value="ECO:0000250"/>
    <property type="project" value="UniProtKB"/>
</dbReference>
<dbReference type="GO" id="GO:0031648">
    <property type="term" value="P:protein destabilization"/>
    <property type="evidence" value="ECO:0000250"/>
    <property type="project" value="UniProtKB"/>
</dbReference>
<dbReference type="GO" id="GO:0070534">
    <property type="term" value="P:protein K63-linked ubiquitination"/>
    <property type="evidence" value="ECO:0000250"/>
    <property type="project" value="UniProtKB"/>
</dbReference>
<dbReference type="GO" id="GO:0006513">
    <property type="term" value="P:protein monoubiquitination"/>
    <property type="evidence" value="ECO:0000250"/>
    <property type="project" value="UniProtKB"/>
</dbReference>
<dbReference type="GO" id="GO:0000209">
    <property type="term" value="P:protein polyubiquitination"/>
    <property type="evidence" value="ECO:0000250"/>
    <property type="project" value="UniProtKB"/>
</dbReference>
<dbReference type="GO" id="GO:0016567">
    <property type="term" value="P:protein ubiquitination"/>
    <property type="evidence" value="ECO:0000250"/>
    <property type="project" value="UniProtKB"/>
</dbReference>
<dbReference type="GO" id="GO:0010468">
    <property type="term" value="P:regulation of gene expression"/>
    <property type="evidence" value="ECO:0000318"/>
    <property type="project" value="GO_Central"/>
</dbReference>
<dbReference type="GO" id="GO:0034341">
    <property type="term" value="P:response to type II interferon"/>
    <property type="evidence" value="ECO:0000250"/>
    <property type="project" value="UniProtKB"/>
</dbReference>
<dbReference type="GO" id="GO:0035617">
    <property type="term" value="P:stress granule disassembly"/>
    <property type="evidence" value="ECO:0000250"/>
    <property type="project" value="UniProtKB"/>
</dbReference>
<dbReference type="CDD" id="cd19772">
    <property type="entry name" value="Bbox2_TRIM21_C-IV"/>
    <property type="match status" value="1"/>
</dbReference>
<dbReference type="CDD" id="cd16596">
    <property type="entry name" value="RING-HC_TRIM21_C-IV"/>
    <property type="match status" value="1"/>
</dbReference>
<dbReference type="CDD" id="cd12900">
    <property type="entry name" value="SPRY_PRY_TRIM21"/>
    <property type="match status" value="1"/>
</dbReference>
<dbReference type="FunFam" id="2.60.120.920:FF:000004">
    <property type="entry name" value="Butyrophilin subfamily 1 member A1"/>
    <property type="match status" value="1"/>
</dbReference>
<dbReference type="FunFam" id="3.30.40.10:FF:000144">
    <property type="entry name" value="Tripartite motif-containing 5 (Predicted)"/>
    <property type="match status" value="1"/>
</dbReference>
<dbReference type="Gene3D" id="2.60.120.920">
    <property type="match status" value="1"/>
</dbReference>
<dbReference type="Gene3D" id="3.30.160.60">
    <property type="entry name" value="Classic Zinc Finger"/>
    <property type="match status" value="1"/>
</dbReference>
<dbReference type="Gene3D" id="3.30.40.10">
    <property type="entry name" value="Zinc/RING finger domain, C3HC4 (zinc finger)"/>
    <property type="match status" value="1"/>
</dbReference>
<dbReference type="InterPro" id="IPR001870">
    <property type="entry name" value="B30.2/SPRY"/>
</dbReference>
<dbReference type="InterPro" id="IPR043136">
    <property type="entry name" value="B30.2/SPRY_sf"/>
</dbReference>
<dbReference type="InterPro" id="IPR003879">
    <property type="entry name" value="Butyrophylin_SPRY"/>
</dbReference>
<dbReference type="InterPro" id="IPR013320">
    <property type="entry name" value="ConA-like_dom_sf"/>
</dbReference>
<dbReference type="InterPro" id="IPR006574">
    <property type="entry name" value="PRY"/>
</dbReference>
<dbReference type="InterPro" id="IPR035831">
    <property type="entry name" value="PRY/SPRY_TRIM21"/>
</dbReference>
<dbReference type="InterPro" id="IPR003877">
    <property type="entry name" value="SPRY_dom"/>
</dbReference>
<dbReference type="InterPro" id="IPR050143">
    <property type="entry name" value="TRIM/RBCC"/>
</dbReference>
<dbReference type="InterPro" id="IPR000315">
    <property type="entry name" value="Znf_B-box"/>
</dbReference>
<dbReference type="InterPro" id="IPR020457">
    <property type="entry name" value="Znf_B-box_chordata"/>
</dbReference>
<dbReference type="InterPro" id="IPR018957">
    <property type="entry name" value="Znf_C3HC4_RING-type"/>
</dbReference>
<dbReference type="InterPro" id="IPR001841">
    <property type="entry name" value="Znf_RING"/>
</dbReference>
<dbReference type="InterPro" id="IPR013083">
    <property type="entry name" value="Znf_RING/FYVE/PHD"/>
</dbReference>
<dbReference type="InterPro" id="IPR017907">
    <property type="entry name" value="Znf_RING_CS"/>
</dbReference>
<dbReference type="PANTHER" id="PTHR24103">
    <property type="entry name" value="E3 UBIQUITIN-PROTEIN LIGASE TRIM"/>
    <property type="match status" value="1"/>
</dbReference>
<dbReference type="Pfam" id="PF13765">
    <property type="entry name" value="PRY"/>
    <property type="match status" value="1"/>
</dbReference>
<dbReference type="Pfam" id="PF00622">
    <property type="entry name" value="SPRY"/>
    <property type="match status" value="1"/>
</dbReference>
<dbReference type="Pfam" id="PF00643">
    <property type="entry name" value="zf-B_box"/>
    <property type="match status" value="1"/>
</dbReference>
<dbReference type="Pfam" id="PF00097">
    <property type="entry name" value="zf-C3HC4"/>
    <property type="match status" value="1"/>
</dbReference>
<dbReference type="PRINTS" id="PR01406">
    <property type="entry name" value="BBOXZNFINGER"/>
</dbReference>
<dbReference type="PRINTS" id="PR01407">
    <property type="entry name" value="BUTYPHLNCDUF"/>
</dbReference>
<dbReference type="SMART" id="SM00336">
    <property type="entry name" value="BBOX"/>
    <property type="match status" value="1"/>
</dbReference>
<dbReference type="SMART" id="SM00589">
    <property type="entry name" value="PRY"/>
    <property type="match status" value="1"/>
</dbReference>
<dbReference type="SMART" id="SM00184">
    <property type="entry name" value="RING"/>
    <property type="match status" value="1"/>
</dbReference>
<dbReference type="SMART" id="SM00449">
    <property type="entry name" value="SPRY"/>
    <property type="match status" value="1"/>
</dbReference>
<dbReference type="SUPFAM" id="SSF57845">
    <property type="entry name" value="B-box zinc-binding domain"/>
    <property type="match status" value="1"/>
</dbReference>
<dbReference type="SUPFAM" id="SSF49899">
    <property type="entry name" value="Concanavalin A-like lectins/glucanases"/>
    <property type="match status" value="1"/>
</dbReference>
<dbReference type="SUPFAM" id="SSF57850">
    <property type="entry name" value="RING/U-box"/>
    <property type="match status" value="1"/>
</dbReference>
<dbReference type="PROSITE" id="PS50188">
    <property type="entry name" value="B302_SPRY"/>
    <property type="match status" value="1"/>
</dbReference>
<dbReference type="PROSITE" id="PS50119">
    <property type="entry name" value="ZF_BBOX"/>
    <property type="match status" value="1"/>
</dbReference>
<dbReference type="PROSITE" id="PS00518">
    <property type="entry name" value="ZF_RING_1"/>
    <property type="match status" value="1"/>
</dbReference>
<dbReference type="PROSITE" id="PS50089">
    <property type="entry name" value="ZF_RING_2"/>
    <property type="match status" value="1"/>
</dbReference>
<reference key="1">
    <citation type="journal article" date="2003" name="NeuroReport">
        <title>The Ro52/SS-A autoantigen has elevated expression at the brain microvasculature.</title>
        <authorList>
            <person name="Shusta E.V."/>
            <person name="Li J.Y."/>
            <person name="Boado R.J."/>
            <person name="Pardridge W.M."/>
        </authorList>
    </citation>
    <scope>NUCLEOTIDE SEQUENCE [MRNA]</scope>
</reference>
<reference key="2">
    <citation type="journal article" date="2005" name="BMC Genomics">
        <title>Characterization of 954 bovine full-CDS cDNA sequences.</title>
        <authorList>
            <person name="Harhay G.P."/>
            <person name="Sonstegard T.S."/>
            <person name="Keele J.W."/>
            <person name="Heaton M.P."/>
            <person name="Clawson M.L."/>
            <person name="Snelling W.M."/>
            <person name="Wiedmann R.T."/>
            <person name="Van Tassell C.P."/>
            <person name="Smith T.P.L."/>
        </authorList>
    </citation>
    <scope>NUCLEOTIDE SEQUENCE [LARGE SCALE MRNA]</scope>
</reference>
<reference key="3">
    <citation type="submission" date="2006-09" db="EMBL/GenBank/DDBJ databases">
        <authorList>
            <consortium name="NIH - Mammalian Gene Collection (MGC) project"/>
        </authorList>
    </citation>
    <scope>NUCLEOTIDE SEQUENCE [LARGE SCALE MRNA]</scope>
    <source>
        <strain>Hereford</strain>
        <tissue>Hippocampus</tissue>
    </source>
</reference>
<keyword id="KW-0131">Cell cycle</keyword>
<keyword id="KW-0175">Coiled coil</keyword>
<keyword id="KW-0963">Cytoplasm</keyword>
<keyword id="KW-0968">Cytoplasmic vesicle</keyword>
<keyword id="KW-0238">DNA-binding</keyword>
<keyword id="KW-0479">Metal-binding</keyword>
<keyword id="KW-0539">Nucleus</keyword>
<keyword id="KW-0597">Phosphoprotein</keyword>
<keyword id="KW-1185">Reference proteome</keyword>
<keyword id="KW-0687">Ribonucleoprotein</keyword>
<keyword id="KW-0694">RNA-binding</keyword>
<keyword id="KW-0808">Transferase</keyword>
<keyword id="KW-0832">Ubl conjugation</keyword>
<keyword id="KW-0833">Ubl conjugation pathway</keyword>
<keyword id="KW-0862">Zinc</keyword>
<keyword id="KW-0863">Zinc-finger</keyword>
<proteinExistence type="evidence at transcript level"/>
<protein>
    <recommendedName>
        <fullName>E3 ubiquitin-protein ligase TRIM21</fullName>
        <ecNumber>2.3.2.27</ecNumber>
    </recommendedName>
    <alternativeName>
        <fullName>52 kDa Ro protein</fullName>
    </alternativeName>
    <alternativeName>
        <fullName>52 kDa ribonucleoprotein autoantigen Ro/SS-A</fullName>
    </alternativeName>
    <alternativeName>
        <fullName>Ro(SS-A)</fullName>
    </alternativeName>
    <alternativeName>
        <fullName>Sjoegren syndrome type A antigen</fullName>
        <shortName>SS-A</shortName>
    </alternativeName>
    <alternativeName>
        <fullName>Tripartite motif-containing protein 21</fullName>
    </alternativeName>
</protein>
<evidence type="ECO:0000250" key="1"/>
<evidence type="ECO:0000250" key="2">
    <source>
        <dbReference type="UniProtKB" id="P19474"/>
    </source>
</evidence>
<evidence type="ECO:0000250" key="3">
    <source>
        <dbReference type="UniProtKB" id="Q62191"/>
    </source>
</evidence>
<evidence type="ECO:0000255" key="4"/>
<evidence type="ECO:0000255" key="5">
    <source>
        <dbReference type="PROSITE-ProRule" id="PRU00024"/>
    </source>
</evidence>
<evidence type="ECO:0000255" key="6">
    <source>
        <dbReference type="PROSITE-ProRule" id="PRU00175"/>
    </source>
</evidence>
<evidence type="ECO:0000255" key="7">
    <source>
        <dbReference type="PROSITE-ProRule" id="PRU00548"/>
    </source>
</evidence>
<evidence type="ECO:0000305" key="8"/>
<accession>Q7YRV4</accession>
<accession>A4FV39</accession>
<feature type="chain" id="PRO_0000246175" description="E3 ubiquitin-protein ligase TRIM21">
    <location>
        <begin position="1"/>
        <end position="469"/>
    </location>
</feature>
<feature type="domain" description="B30.2/SPRY" evidence="7">
    <location>
        <begin position="268"/>
        <end position="467"/>
    </location>
</feature>
<feature type="zinc finger region" description="RING-type" evidence="6">
    <location>
        <begin position="16"/>
        <end position="55"/>
    </location>
</feature>
<feature type="zinc finger region" description="B box-type" evidence="5">
    <location>
        <begin position="87"/>
        <end position="128"/>
    </location>
</feature>
<feature type="coiled-coil region" evidence="4">
    <location>
        <begin position="128"/>
        <end position="245"/>
    </location>
</feature>
<feature type="binding site" evidence="5">
    <location>
        <position position="92"/>
    </location>
    <ligand>
        <name>Zn(2+)</name>
        <dbReference type="ChEBI" id="CHEBI:29105"/>
    </ligand>
</feature>
<feature type="binding site" evidence="5">
    <location>
        <position position="95"/>
    </location>
    <ligand>
        <name>Zn(2+)</name>
        <dbReference type="ChEBI" id="CHEBI:29105"/>
    </ligand>
</feature>
<feature type="binding site" evidence="5">
    <location>
        <position position="114"/>
    </location>
    <ligand>
        <name>Zn(2+)</name>
        <dbReference type="ChEBI" id="CHEBI:29105"/>
    </ligand>
</feature>
<feature type="binding site" evidence="5">
    <location>
        <position position="120"/>
    </location>
    <ligand>
        <name>Zn(2+)</name>
        <dbReference type="ChEBI" id="CHEBI:29105"/>
    </ligand>
</feature>
<feature type="modified residue" description="Phosphoserine" evidence="2">
    <location>
        <position position="266"/>
    </location>
</feature>
<gene>
    <name type="primary">TRIM21</name>
</gene>
<comment type="function">
    <text evidence="2 3">E3 ubiquitin-protein ligase whose activity is dependent on E2 enzymes, UBE2D1, UBE2D2, UBE2E1 and UBE2E2. Forms a ubiquitin ligase complex in cooperation with the E2 UBE2D2 that is used not only for the ubiquitination of USP4 and IKBKB but also for its self-ubiquitination. Component of cullin-RING-based SCF (SKP1-CUL1-F-box protein) E3 ubiquitin-protein ligase complexes such as SCF(SKP2)-like complexes. A TRIM21-containing SCF(SKP2)-like complex is shown to mediate ubiquitination of CDKN1B ('Thr-187' phosphorylated-form), thereby promoting its degradation by the proteasome. Monoubiquitinates IKBKB that will negatively regulates Tax-induced NF-kappa-B signaling. Negatively regulates IFN-beta production post-pathogen recognition by catalyzing polyubiquitin-mediated degradation of IRF3. Mediates the ubiquitin-mediated proteasomal degradation of IgG1 heavy chain, which is linked to the VCP-mediated ER-associated degradation (ERAD) pathway. Promotes IRF8 ubiquitination, which enhanced the ability of IRF8 to stimulate cytokine genes transcription in macrophages. Plays a role in the regulation of the cell cycle progression. Enhances the decapping activity of DCP2. Exists as a ribonucleoprotein particle present in all mammalian cells studied and composed of a single polypeptide and one of four small RNA molecules. At least two isoforms are present in nucleated and red blood cells, and tissue specific differences in RO/SSA proteins have been identified. The common feature of these proteins is their ability to bind HY RNAs.2. Involved in the regulation of innate immunity and the inflammatory response in response to IFNG/IFN-gamma. Organizes autophagic machinery by serving as a platform for the assembly of ULK1, Beclin 1/BECN1 and ATG8 family members and recognizes specific autophagy targets, thus coordinating target recognition with assembly of the autophagic apparatus and initiation of autophagy. Also regulates autophagy through FIP200/RB1CC1 ubiquitination and subsequent decreased protein stability. Represses the innate antiviral response by facilitating the formation of the NMI-IFI35 complex through 'Lys-63'-linked ubiquitination of NMI. During viral infection, promotes cell pyroptosis by mediating 'Lys-6'-linked ubiquitination of ISG12a/IFI27, facilitating its translocation into the mitochondria and subsequent CASP3 activation. When up-regulated through the IFN/JAK/STAT signaling pathway, promotes 'Lys-27'-linked ubiquitination of MAVS, leading to the recruitment of TBK1 and up-regulation of innate immunity. Mediates 'Lys-63'-linked polyubiquitination of G3BP1 in response to heat shock, leading to stress granule disassembly.</text>
</comment>
<comment type="catalytic activity">
    <reaction>
        <text>S-ubiquitinyl-[E2 ubiquitin-conjugating enzyme]-L-cysteine + [acceptor protein]-L-lysine = [E2 ubiquitin-conjugating enzyme]-L-cysteine + N(6)-ubiquitinyl-[acceptor protein]-L-lysine.</text>
        <dbReference type="EC" id="2.3.2.27"/>
    </reaction>
</comment>
<comment type="pathway">
    <text>Protein modification; protein ubiquitination.</text>
</comment>
<comment type="subunit">
    <text evidence="2">Homotrimer. Interacts (via C-terminus) with IRF8 (via C-terminus). Component of a SCF(SKP2)-like complex containing CUL1, SKP1, TRIM21 and SKP2. Interacts with CALR, CUL1, FBXW11, HSPA5, IKBKB, IRF3, SKP1 and VCP. Interacts with SKP2; the interaction with SKP2 does not depend on an intact F-box domain. Interacts (via N-terminus and C-terminus) with DCP2 (via N-terminus and C-terminus). Interacts with ULK1, BECN1 and with ATG8 family members, including GABARAP, GABARAPL1, GABARAPL2 and MAP1LC3C/LC3C. Interacts with TRIM21 and SQSTM1/sequestosome 1. Interacts with IRF3 (By similarity). Interacts (via the SPRY domain) with NMI (via coiled-coil domain); the interaction promotes 'Lys-63'-linked ubiquitination of NMI (By similarity). Interacts with IFI35 and NMI; the interaction facilitates NMI-IFI35 complex formation (By similarity).</text>
</comment>
<comment type="subcellular location">
    <subcellularLocation>
        <location evidence="2">Cytoplasm</location>
    </subcellularLocation>
    <subcellularLocation>
        <location evidence="2">Cytoplasmic vesicle</location>
        <location evidence="2">Autophagosome</location>
    </subcellularLocation>
    <subcellularLocation>
        <location evidence="2">Nucleus</location>
    </subcellularLocation>
    <subcellularLocation>
        <location evidence="2">Cytoplasm</location>
        <location evidence="2">P-body</location>
    </subcellularLocation>
    <subcellularLocation>
        <location evidence="2">Cytoplasm</location>
        <location evidence="2">Stress granule</location>
    </subcellularLocation>
    <text evidence="2">Enters the nucleus upon exposure to nitric oxide. Localizes to small dot- or rod-like structures in the cytoplasm, called processing bodies (P-bodies) that are located underneath the plasma membrane and also diffusely in the cytoplasm. They are located along the microtubules and are highly motile in cells. Colocalizes with DCP2 in P-bodies. Localizes to stress granules in response to oxidative stress.</text>
</comment>
<comment type="domain">
    <text evidence="2">The coiled-coil is necessary for the cytoplasmic localization.</text>
</comment>
<comment type="domain">
    <text evidence="2">The RING-type zinc finger is necessary for ubiquitination and for the IRF3-driven interferon beta promoter activity. Interacts with SKP2 and CUL1 in a RING finger-independent manner. The RING-type zinc finger is necessary for ubiquitination of NMI.</text>
</comment>
<comment type="domain">
    <text evidence="2">The B30.2/SPRY domain is necessary for the cytoplasmic localization, the interaction with IRF3 and for the IRF3-driven interferon beta promoter activity. The B30.2/SPRY domain is necessary for the interaction with NMI.</text>
</comment>
<comment type="PTM">
    <text evidence="1">Autoubiquitinated; does not lead to its proteasomal degradation. Deubiquitinated by USP4; leading to its stabilization (By similarity).</text>
</comment>
<comment type="similarity">
    <text evidence="8">Belongs to the TRIM/RBCC family.</text>
</comment>
<organism>
    <name type="scientific">Bos taurus</name>
    <name type="common">Bovine</name>
    <dbReference type="NCBI Taxonomy" id="9913"/>
    <lineage>
        <taxon>Eukaryota</taxon>
        <taxon>Metazoa</taxon>
        <taxon>Chordata</taxon>
        <taxon>Craniata</taxon>
        <taxon>Vertebrata</taxon>
        <taxon>Euteleostomi</taxon>
        <taxon>Mammalia</taxon>
        <taxon>Eutheria</taxon>
        <taxon>Laurasiatheria</taxon>
        <taxon>Artiodactyla</taxon>
        <taxon>Ruminantia</taxon>
        <taxon>Pecora</taxon>
        <taxon>Bovidae</taxon>
        <taxon>Bovinae</taxon>
        <taxon>Bos</taxon>
    </lineage>
</organism>
<sequence length="469" mass="54031">MASAVPLTMMWEEVTCSICLDPMVEPMSIECGHSFCQECISEVGKEGGSVCPVCRRHFLLQNLRPNRQVANMVDNLRKISQGAKESPHGELCVVHREKIHLFCEEDGKALCWVCSQSQKHRDHPMVPIEEAAQEYQEKLQVALNKLRHKQELAEKLELDIAMKKASWKGKVEAHKLRIHEEFVRQKNFLAEEEQKQLQKLEEEERQQLRTLGDTEARLAQQIQALQELIAELERRRRGSALELLQEVKSVLERSESWNLKELDVASTDLRNVFYVPGIKKMLRTCGVHITLDPQTANPWLILSENRRQVRLANTRQEVPENEERFDSYPMVLGAQRFDSGKVYWEVDVTGKEAWDLGVCRDNVRRKGQFLLNSDTGFWIIWLWNKQKYEAGTCPQTPLHLQVPPNRIGIFLDYEASTVSFYNITDHASLIYTFSECAFAGPLRPFFNPGFNDRGTNSAPLILCPLKTGW</sequence>